<accession>P48529</accession>
<dbReference type="EC" id="3.1.3.16"/>
<dbReference type="EMBL" id="Z22587">
    <property type="protein sequence ID" value="CAA80302.1"/>
    <property type="molecule type" value="mRNA"/>
</dbReference>
<dbReference type="EMBL" id="AF030289">
    <property type="protein sequence ID" value="AAB86418.1"/>
    <property type="molecule type" value="Genomic_DNA"/>
</dbReference>
<dbReference type="EMBL" id="AL035440">
    <property type="protein sequence ID" value="CAB36518.1"/>
    <property type="molecule type" value="Genomic_DNA"/>
</dbReference>
<dbReference type="EMBL" id="AL161565">
    <property type="protein sequence ID" value="CAB79527.1"/>
    <property type="molecule type" value="Genomic_DNA"/>
</dbReference>
<dbReference type="EMBL" id="CP002687">
    <property type="protein sequence ID" value="AEE85245.1"/>
    <property type="molecule type" value="Genomic_DNA"/>
</dbReference>
<dbReference type="PIR" id="S42558">
    <property type="entry name" value="S42558"/>
</dbReference>
<dbReference type="RefSeq" id="NP_194402.1">
    <property type="nucleotide sequence ID" value="NM_118806.6"/>
</dbReference>
<dbReference type="SMR" id="P48529"/>
<dbReference type="BioGRID" id="14066">
    <property type="interactions" value="2"/>
</dbReference>
<dbReference type="FunCoup" id="P48529">
    <property type="interactions" value="3967"/>
</dbReference>
<dbReference type="IntAct" id="P48529">
    <property type="interactions" value="1"/>
</dbReference>
<dbReference type="STRING" id="3702.P48529"/>
<dbReference type="PaxDb" id="3702-AT4G26720.1"/>
<dbReference type="ProteomicsDB" id="226332"/>
<dbReference type="EnsemblPlants" id="AT4G26720.1">
    <property type="protein sequence ID" value="AT4G26720.1"/>
    <property type="gene ID" value="AT4G26720"/>
</dbReference>
<dbReference type="GeneID" id="828779"/>
<dbReference type="Gramene" id="AT4G26720.1">
    <property type="protein sequence ID" value="AT4G26720.1"/>
    <property type="gene ID" value="AT4G26720"/>
</dbReference>
<dbReference type="KEGG" id="ath:AT4G26720"/>
<dbReference type="Araport" id="AT4G26720"/>
<dbReference type="TAIR" id="AT4G26720">
    <property type="gene designation" value="PPX1"/>
</dbReference>
<dbReference type="eggNOG" id="KOG0372">
    <property type="taxonomic scope" value="Eukaryota"/>
</dbReference>
<dbReference type="HOGENOM" id="CLU_004962_8_1_1"/>
<dbReference type="InParanoid" id="P48529"/>
<dbReference type="OMA" id="WHACTEV"/>
<dbReference type="OrthoDB" id="1930084at2759"/>
<dbReference type="PhylomeDB" id="P48529"/>
<dbReference type="PRO" id="PR:P48529"/>
<dbReference type="Proteomes" id="UP000006548">
    <property type="component" value="Chromosome 4"/>
</dbReference>
<dbReference type="ExpressionAtlas" id="P48529">
    <property type="expression patterns" value="baseline and differential"/>
</dbReference>
<dbReference type="GO" id="GO:0005737">
    <property type="term" value="C:cytoplasm"/>
    <property type="evidence" value="ECO:0007005"/>
    <property type="project" value="TAIR"/>
</dbReference>
<dbReference type="GO" id="GO:0005829">
    <property type="term" value="C:cytosol"/>
    <property type="evidence" value="ECO:0000314"/>
    <property type="project" value="TAIR"/>
</dbReference>
<dbReference type="GO" id="GO:0005634">
    <property type="term" value="C:nucleus"/>
    <property type="evidence" value="ECO:0000314"/>
    <property type="project" value="TAIR"/>
</dbReference>
<dbReference type="GO" id="GO:0009532">
    <property type="term" value="C:plastid stroma"/>
    <property type="evidence" value="ECO:0007669"/>
    <property type="project" value="UniProtKB-SubCell"/>
</dbReference>
<dbReference type="GO" id="GO:0046872">
    <property type="term" value="F:metal ion binding"/>
    <property type="evidence" value="ECO:0007669"/>
    <property type="project" value="UniProtKB-KW"/>
</dbReference>
<dbReference type="GO" id="GO:0004722">
    <property type="term" value="F:protein serine/threonine phosphatase activity"/>
    <property type="evidence" value="ECO:0000314"/>
    <property type="project" value="TAIR"/>
</dbReference>
<dbReference type="GO" id="GO:0007131">
    <property type="term" value="P:reciprocal meiotic recombination"/>
    <property type="evidence" value="ECO:0000315"/>
    <property type="project" value="TAIR"/>
</dbReference>
<dbReference type="CDD" id="cd07415">
    <property type="entry name" value="MPP_PP2A_PP4_PP6"/>
    <property type="match status" value="1"/>
</dbReference>
<dbReference type="FunFam" id="3.60.21.10:FF:000010">
    <property type="entry name" value="Serine/threonine-protein phosphatase"/>
    <property type="match status" value="1"/>
</dbReference>
<dbReference type="Gene3D" id="3.60.21.10">
    <property type="match status" value="1"/>
</dbReference>
<dbReference type="InterPro" id="IPR004843">
    <property type="entry name" value="Calcineurin-like_PHP_ApaH"/>
</dbReference>
<dbReference type="InterPro" id="IPR029052">
    <property type="entry name" value="Metallo-depent_PP-like"/>
</dbReference>
<dbReference type="InterPro" id="IPR047129">
    <property type="entry name" value="PPA2-like"/>
</dbReference>
<dbReference type="InterPro" id="IPR006186">
    <property type="entry name" value="Ser/Thr-sp_prot-phosphatase"/>
</dbReference>
<dbReference type="PANTHER" id="PTHR45619">
    <property type="entry name" value="SERINE/THREONINE-PROTEIN PHOSPHATASE PP2A-RELATED"/>
    <property type="match status" value="1"/>
</dbReference>
<dbReference type="Pfam" id="PF00149">
    <property type="entry name" value="Metallophos"/>
    <property type="match status" value="1"/>
</dbReference>
<dbReference type="PRINTS" id="PR00114">
    <property type="entry name" value="STPHPHTASE"/>
</dbReference>
<dbReference type="SMART" id="SM00156">
    <property type="entry name" value="PP2Ac"/>
    <property type="match status" value="1"/>
</dbReference>
<dbReference type="SUPFAM" id="SSF56300">
    <property type="entry name" value="Metallo-dependent phosphatases"/>
    <property type="match status" value="1"/>
</dbReference>
<dbReference type="PROSITE" id="PS00125">
    <property type="entry name" value="SER_THR_PHOSPHATASE"/>
    <property type="match status" value="1"/>
</dbReference>
<gene>
    <name type="primary">PPX1</name>
    <name type="synonym">EP124</name>
    <name type="synonym">EP129</name>
    <name type="ordered locus">At4g26720</name>
    <name type="ORF">F10M23.60</name>
</gene>
<feature type="chain" id="PRO_0000058886" description="Serine/threonine-protein phosphatase PP-X isozyme 1">
    <location>
        <begin position="1"/>
        <end position="305"/>
    </location>
</feature>
<feature type="active site" description="Proton donor" evidence="1">
    <location>
        <position position="112"/>
    </location>
</feature>
<feature type="binding site" evidence="1">
    <location>
        <position position="51"/>
    </location>
    <ligand>
        <name>Mn(2+)</name>
        <dbReference type="ChEBI" id="CHEBI:29035"/>
        <label>1</label>
    </ligand>
</feature>
<feature type="binding site" evidence="1">
    <location>
        <position position="53"/>
    </location>
    <ligand>
        <name>Mn(2+)</name>
        <dbReference type="ChEBI" id="CHEBI:29035"/>
        <label>1</label>
    </ligand>
</feature>
<feature type="binding site" evidence="1">
    <location>
        <position position="79"/>
    </location>
    <ligand>
        <name>Mn(2+)</name>
        <dbReference type="ChEBI" id="CHEBI:29035"/>
        <label>1</label>
    </ligand>
</feature>
<feature type="binding site" evidence="1">
    <location>
        <position position="79"/>
    </location>
    <ligand>
        <name>Mn(2+)</name>
        <dbReference type="ChEBI" id="CHEBI:29035"/>
        <label>2</label>
    </ligand>
</feature>
<feature type="binding site" evidence="1">
    <location>
        <position position="111"/>
    </location>
    <ligand>
        <name>Mn(2+)</name>
        <dbReference type="ChEBI" id="CHEBI:29035"/>
        <label>2</label>
    </ligand>
</feature>
<feature type="binding site" evidence="1">
    <location>
        <position position="161"/>
    </location>
    <ligand>
        <name>Mn(2+)</name>
        <dbReference type="ChEBI" id="CHEBI:29035"/>
        <label>2</label>
    </ligand>
</feature>
<feature type="binding site" evidence="1">
    <location>
        <position position="236"/>
    </location>
    <ligand>
        <name>Mn(2+)</name>
        <dbReference type="ChEBI" id="CHEBI:29035"/>
        <label>2</label>
    </ligand>
</feature>
<protein>
    <recommendedName>
        <fullName>Serine/threonine-protein phosphatase PP-X isozyme 1</fullName>
        <ecNumber>3.1.3.16</ecNumber>
    </recommendedName>
</protein>
<comment type="catalytic activity">
    <reaction>
        <text>O-phospho-L-seryl-[protein] + H2O = L-seryl-[protein] + phosphate</text>
        <dbReference type="Rhea" id="RHEA:20629"/>
        <dbReference type="Rhea" id="RHEA-COMP:9863"/>
        <dbReference type="Rhea" id="RHEA-COMP:11604"/>
        <dbReference type="ChEBI" id="CHEBI:15377"/>
        <dbReference type="ChEBI" id="CHEBI:29999"/>
        <dbReference type="ChEBI" id="CHEBI:43474"/>
        <dbReference type="ChEBI" id="CHEBI:83421"/>
        <dbReference type="EC" id="3.1.3.16"/>
    </reaction>
</comment>
<comment type="catalytic activity">
    <reaction>
        <text>O-phospho-L-threonyl-[protein] + H2O = L-threonyl-[protein] + phosphate</text>
        <dbReference type="Rhea" id="RHEA:47004"/>
        <dbReference type="Rhea" id="RHEA-COMP:11060"/>
        <dbReference type="Rhea" id="RHEA-COMP:11605"/>
        <dbReference type="ChEBI" id="CHEBI:15377"/>
        <dbReference type="ChEBI" id="CHEBI:30013"/>
        <dbReference type="ChEBI" id="CHEBI:43474"/>
        <dbReference type="ChEBI" id="CHEBI:61977"/>
        <dbReference type="EC" id="3.1.3.16"/>
    </reaction>
</comment>
<comment type="cofactor">
    <cofactor evidence="1">
        <name>Mn(2+)</name>
        <dbReference type="ChEBI" id="CHEBI:29035"/>
    </cofactor>
    <text evidence="1">Binds 2 manganese ions per subunit.</text>
</comment>
<comment type="subunit">
    <text evidence="3 4">Interacts with TAP46.</text>
</comment>
<comment type="subcellular location">
    <subcellularLocation>
        <location evidence="2">Plastid stroma</location>
    </subcellularLocation>
</comment>
<comment type="tissue specificity">
    <text evidence="2">Ubiquitous, mostly expressed in root mersitems, flowers, and vascular tissues.</text>
</comment>
<comment type="similarity">
    <text evidence="5">Belongs to the PPP phosphatase family. PP-4 (PP-X) subfamily.</text>
</comment>
<organism>
    <name type="scientific">Arabidopsis thaliana</name>
    <name type="common">Mouse-ear cress</name>
    <dbReference type="NCBI Taxonomy" id="3702"/>
    <lineage>
        <taxon>Eukaryota</taxon>
        <taxon>Viridiplantae</taxon>
        <taxon>Streptophyta</taxon>
        <taxon>Embryophyta</taxon>
        <taxon>Tracheophyta</taxon>
        <taxon>Spermatophyta</taxon>
        <taxon>Magnoliopsida</taxon>
        <taxon>eudicotyledons</taxon>
        <taxon>Gunneridae</taxon>
        <taxon>Pentapetalae</taxon>
        <taxon>rosids</taxon>
        <taxon>malvids</taxon>
        <taxon>Brassicales</taxon>
        <taxon>Brassicaceae</taxon>
        <taxon>Camelineae</taxon>
        <taxon>Arabidopsis</taxon>
    </lineage>
</organism>
<sequence>MSDLDRQIGQLKRCEPLSESEVKALCLKAMEILVEESNVQRVDAPVTLCGDIHGQFYDMMELFKVGGDCPKTNYLFMGDFVDRGYYSVETFLLLLALKVRYPDRITLIRGNHESRQITQVYGFYDECLRKYGSSNVWRYCTDIFDYMSLSAVVENKIFCVHGGLSPAIMTLDQIRTIDRKQEVPHDGAMCDLLWSDPEDIVDGWGLSPRGAGFLFGGSVVTSFNHSNNIDYIARAHQLVMEGYKWMFDSQIVTVWSAPNYCYRCGNVASILELDENLNKEFRVFDAAQQDSRGPPAKKPAPDYFL</sequence>
<reference key="1">
    <citation type="journal article" date="1993" name="Plant Mol. Biol.">
        <title>Identification and molecular cloning of two homologues of protein phosphatase X from Arabidopsis thaliana.</title>
        <authorList>
            <person name="Perez-Callejon E."/>
            <person name="Casamayor A."/>
            <person name="Pujol G."/>
            <person name="Clua E."/>
            <person name="Ferrer A."/>
            <person name="Arino J."/>
        </authorList>
    </citation>
    <scope>NUCLEOTIDE SEQUENCE [MRNA]</scope>
    <source>
        <tissue>Leaf</tissue>
    </source>
</reference>
<reference key="2">
    <citation type="journal article" date="2000" name="Plant Mol. Biol.">
        <title>The Arabidopsis thaliana PPX/PP4 phosphatases: molecular cloning and structural organization of the genes and immunolocalization of the proteins to plastids.</title>
        <authorList>
            <person name="Pujol G."/>
            <person name="Baskin T.I."/>
            <person name="Casamayor A."/>
            <person name="Cortadellas N."/>
            <person name="Ferrer A."/>
            <person name="Arino J."/>
        </authorList>
    </citation>
    <scope>NUCLEOTIDE SEQUENCE [GENOMIC DNA]</scope>
    <scope>SUBCELLULAR LOCATION</scope>
    <scope>TISSUE SPECIFICITY</scope>
    <source>
        <strain>cv. Columbia</strain>
    </source>
</reference>
<reference key="3">
    <citation type="journal article" date="1999" name="Nature">
        <title>Sequence and analysis of chromosome 4 of the plant Arabidopsis thaliana.</title>
        <authorList>
            <person name="Mayer K.F.X."/>
            <person name="Schueller C."/>
            <person name="Wambutt R."/>
            <person name="Murphy G."/>
            <person name="Volckaert G."/>
            <person name="Pohl T."/>
            <person name="Duesterhoeft A."/>
            <person name="Stiekema W."/>
            <person name="Entian K.-D."/>
            <person name="Terryn N."/>
            <person name="Harris B."/>
            <person name="Ansorge W."/>
            <person name="Brandt P."/>
            <person name="Grivell L.A."/>
            <person name="Rieger M."/>
            <person name="Weichselgartner M."/>
            <person name="de Simone V."/>
            <person name="Obermaier B."/>
            <person name="Mache R."/>
            <person name="Mueller M."/>
            <person name="Kreis M."/>
            <person name="Delseny M."/>
            <person name="Puigdomenech P."/>
            <person name="Watson M."/>
            <person name="Schmidtheini T."/>
            <person name="Reichert B."/>
            <person name="Portetelle D."/>
            <person name="Perez-Alonso M."/>
            <person name="Boutry M."/>
            <person name="Bancroft I."/>
            <person name="Vos P."/>
            <person name="Hoheisel J."/>
            <person name="Zimmermann W."/>
            <person name="Wedler H."/>
            <person name="Ridley P."/>
            <person name="Langham S.-A."/>
            <person name="McCullagh B."/>
            <person name="Bilham L."/>
            <person name="Robben J."/>
            <person name="van der Schueren J."/>
            <person name="Grymonprez B."/>
            <person name="Chuang Y.-J."/>
            <person name="Vandenbussche F."/>
            <person name="Braeken M."/>
            <person name="Weltjens I."/>
            <person name="Voet M."/>
            <person name="Bastiaens I."/>
            <person name="Aert R."/>
            <person name="Defoor E."/>
            <person name="Weitzenegger T."/>
            <person name="Bothe G."/>
            <person name="Ramsperger U."/>
            <person name="Hilbert H."/>
            <person name="Braun M."/>
            <person name="Holzer E."/>
            <person name="Brandt A."/>
            <person name="Peters S."/>
            <person name="van Staveren M."/>
            <person name="Dirkse W."/>
            <person name="Mooijman P."/>
            <person name="Klein Lankhorst R."/>
            <person name="Rose M."/>
            <person name="Hauf J."/>
            <person name="Koetter P."/>
            <person name="Berneiser S."/>
            <person name="Hempel S."/>
            <person name="Feldpausch M."/>
            <person name="Lamberth S."/>
            <person name="Van den Daele H."/>
            <person name="De Keyser A."/>
            <person name="Buysshaert C."/>
            <person name="Gielen J."/>
            <person name="Villarroel R."/>
            <person name="De Clercq R."/>
            <person name="van Montagu M."/>
            <person name="Rogers J."/>
            <person name="Cronin A."/>
            <person name="Quail M.A."/>
            <person name="Bray-Allen S."/>
            <person name="Clark L."/>
            <person name="Doggett J."/>
            <person name="Hall S."/>
            <person name="Kay M."/>
            <person name="Lennard N."/>
            <person name="McLay K."/>
            <person name="Mayes R."/>
            <person name="Pettett A."/>
            <person name="Rajandream M.A."/>
            <person name="Lyne M."/>
            <person name="Benes V."/>
            <person name="Rechmann S."/>
            <person name="Borkova D."/>
            <person name="Bloecker H."/>
            <person name="Scharfe M."/>
            <person name="Grimm M."/>
            <person name="Loehnert T.-H."/>
            <person name="Dose S."/>
            <person name="de Haan M."/>
            <person name="Maarse A.C."/>
            <person name="Schaefer M."/>
            <person name="Mueller-Auer S."/>
            <person name="Gabel C."/>
            <person name="Fuchs M."/>
            <person name="Fartmann B."/>
            <person name="Granderath K."/>
            <person name="Dauner D."/>
            <person name="Herzl A."/>
            <person name="Neumann S."/>
            <person name="Argiriou A."/>
            <person name="Vitale D."/>
            <person name="Liguori R."/>
            <person name="Piravandi E."/>
            <person name="Massenet O."/>
            <person name="Quigley F."/>
            <person name="Clabauld G."/>
            <person name="Muendlein A."/>
            <person name="Felber R."/>
            <person name="Schnabl S."/>
            <person name="Hiller R."/>
            <person name="Schmidt W."/>
            <person name="Lecharny A."/>
            <person name="Aubourg S."/>
            <person name="Chefdor F."/>
            <person name="Cooke R."/>
            <person name="Berger C."/>
            <person name="Monfort A."/>
            <person name="Casacuberta E."/>
            <person name="Gibbons T."/>
            <person name="Weber N."/>
            <person name="Vandenbol M."/>
            <person name="Bargues M."/>
            <person name="Terol J."/>
            <person name="Torres A."/>
            <person name="Perez-Perez A."/>
            <person name="Purnelle B."/>
            <person name="Bent E."/>
            <person name="Johnson S."/>
            <person name="Tacon D."/>
            <person name="Jesse T."/>
            <person name="Heijnen L."/>
            <person name="Schwarz S."/>
            <person name="Scholler P."/>
            <person name="Heber S."/>
            <person name="Francs P."/>
            <person name="Bielke C."/>
            <person name="Frishman D."/>
            <person name="Haase D."/>
            <person name="Lemcke K."/>
            <person name="Mewes H.-W."/>
            <person name="Stocker S."/>
            <person name="Zaccaria P."/>
            <person name="Bevan M."/>
            <person name="Wilson R.K."/>
            <person name="de la Bastide M."/>
            <person name="Habermann K."/>
            <person name="Parnell L."/>
            <person name="Dedhia N."/>
            <person name="Gnoj L."/>
            <person name="Schutz K."/>
            <person name="Huang E."/>
            <person name="Spiegel L."/>
            <person name="Sekhon M."/>
            <person name="Murray J."/>
            <person name="Sheet P."/>
            <person name="Cordes M."/>
            <person name="Abu-Threideh J."/>
            <person name="Stoneking T."/>
            <person name="Kalicki J."/>
            <person name="Graves T."/>
            <person name="Harmon G."/>
            <person name="Edwards J."/>
            <person name="Latreille P."/>
            <person name="Courtney L."/>
            <person name="Cloud J."/>
            <person name="Abbott A."/>
            <person name="Scott K."/>
            <person name="Johnson D."/>
            <person name="Minx P."/>
            <person name="Bentley D."/>
            <person name="Fulton B."/>
            <person name="Miller N."/>
            <person name="Greco T."/>
            <person name="Kemp K."/>
            <person name="Kramer J."/>
            <person name="Fulton L."/>
            <person name="Mardis E."/>
            <person name="Dante M."/>
            <person name="Pepin K."/>
            <person name="Hillier L.W."/>
            <person name="Nelson J."/>
            <person name="Spieth J."/>
            <person name="Ryan E."/>
            <person name="Andrews S."/>
            <person name="Geisel C."/>
            <person name="Layman D."/>
            <person name="Du H."/>
            <person name="Ali J."/>
            <person name="Berghoff A."/>
            <person name="Jones K."/>
            <person name="Drone K."/>
            <person name="Cotton M."/>
            <person name="Joshu C."/>
            <person name="Antonoiu B."/>
            <person name="Zidanic M."/>
            <person name="Strong C."/>
            <person name="Sun H."/>
            <person name="Lamar B."/>
            <person name="Yordan C."/>
            <person name="Ma P."/>
            <person name="Zhong J."/>
            <person name="Preston R."/>
            <person name="Vil D."/>
            <person name="Shekher M."/>
            <person name="Matero A."/>
            <person name="Shah R."/>
            <person name="Swaby I.K."/>
            <person name="O'Shaughnessy A."/>
            <person name="Rodriguez M."/>
            <person name="Hoffman J."/>
            <person name="Till S."/>
            <person name="Granat S."/>
            <person name="Shohdy N."/>
            <person name="Hasegawa A."/>
            <person name="Hameed A."/>
            <person name="Lodhi M."/>
            <person name="Johnson A."/>
            <person name="Chen E."/>
            <person name="Marra M.A."/>
            <person name="Martienssen R."/>
            <person name="McCombie W.R."/>
        </authorList>
    </citation>
    <scope>NUCLEOTIDE SEQUENCE [LARGE SCALE GENOMIC DNA]</scope>
    <source>
        <strain>cv. Columbia</strain>
    </source>
</reference>
<reference key="4">
    <citation type="journal article" date="2017" name="Plant J.">
        <title>Araport11: a complete reannotation of the Arabidopsis thaliana reference genome.</title>
        <authorList>
            <person name="Cheng C.Y."/>
            <person name="Krishnakumar V."/>
            <person name="Chan A.P."/>
            <person name="Thibaud-Nissen F."/>
            <person name="Schobel S."/>
            <person name="Town C.D."/>
        </authorList>
    </citation>
    <scope>GENOME REANNOTATION</scope>
    <source>
        <strain>cv. Columbia</strain>
    </source>
</reference>
<reference key="5">
    <citation type="journal article" date="2007" name="Trends Plant Sci.">
        <title>Arabidopsis PPP family of serine/threonine phosphatases.</title>
        <authorList>
            <person name="Farkas I."/>
            <person name="Dombradi V."/>
            <person name="Miskei M."/>
            <person name="Szabados L."/>
            <person name="Koncz C."/>
        </authorList>
    </citation>
    <scope>GENE FAMILY</scope>
    <scope>NOMENCLATURE</scope>
</reference>
<reference key="6">
    <citation type="journal article" date="2011" name="Plant Cell">
        <title>The PP2A regulatory subunit Tap46, a component of the TOR signaling pathway, modulates growth and metabolism in plants.</title>
        <authorList>
            <person name="Ahn C.S."/>
            <person name="Han J.-A."/>
            <person name="Lee H.-S."/>
            <person name="Lee S."/>
            <person name="Pai H.-S."/>
        </authorList>
    </citation>
    <scope>INTERACTION WITH TAP46</scope>
</reference>
<reference key="7">
    <citation type="journal article" date="2014" name="Plant Physiol.">
        <title>TAP46 plays a positive role in the ABSCISIC ACID INSENSITIVE5-regulated gene expression in Arabidopsis.</title>
        <authorList>
            <person name="Hu R."/>
            <person name="Zhu Y."/>
            <person name="Shen G."/>
            <person name="Zhang H."/>
        </authorList>
    </citation>
    <scope>INTERACTION WITH TAP46</scope>
</reference>
<proteinExistence type="evidence at protein level"/>
<keyword id="KW-0378">Hydrolase</keyword>
<keyword id="KW-0464">Manganese</keyword>
<keyword id="KW-0479">Metal-binding</keyword>
<keyword id="KW-0934">Plastid</keyword>
<keyword id="KW-0904">Protein phosphatase</keyword>
<keyword id="KW-1185">Reference proteome</keyword>
<name>PPX1_ARATH</name>
<evidence type="ECO:0000250" key="1"/>
<evidence type="ECO:0000269" key="2">
    <source>
    </source>
</evidence>
<evidence type="ECO:0000269" key="3">
    <source>
    </source>
</evidence>
<evidence type="ECO:0000269" key="4">
    <source>
    </source>
</evidence>
<evidence type="ECO:0000305" key="5"/>